<proteinExistence type="evidence at protein level"/>
<gene>
    <name type="ordered locus">At4g08330</name>
    <name type="ORF">T28D5.20</name>
</gene>
<accession>Q9STN5</accession>
<dbReference type="EMBL" id="AL109819">
    <property type="protein sequence ID" value="CAB52555.1"/>
    <property type="molecule type" value="Genomic_DNA"/>
</dbReference>
<dbReference type="EMBL" id="AL161511">
    <property type="protein sequence ID" value="CAB77958.1"/>
    <property type="molecule type" value="Genomic_DNA"/>
</dbReference>
<dbReference type="EMBL" id="CP002687">
    <property type="protein sequence ID" value="AEE82627.1"/>
    <property type="molecule type" value="Genomic_DNA"/>
</dbReference>
<dbReference type="EMBL" id="BT004992">
    <property type="protein sequence ID" value="AAO50525.1"/>
    <property type="molecule type" value="mRNA"/>
</dbReference>
<dbReference type="EMBL" id="AK117649">
    <property type="protein sequence ID" value="BAC42303.1"/>
    <property type="molecule type" value="mRNA"/>
</dbReference>
<dbReference type="PIR" id="T14187">
    <property type="entry name" value="T14187"/>
</dbReference>
<dbReference type="RefSeq" id="NP_192573.1">
    <molecule id="Q9STN5-1"/>
    <property type="nucleotide sequence ID" value="NM_116902.3"/>
</dbReference>
<dbReference type="FunCoup" id="Q9STN5">
    <property type="interactions" value="761"/>
</dbReference>
<dbReference type="iPTMnet" id="Q9STN5"/>
<dbReference type="PaxDb" id="3702-AT4G08330.1"/>
<dbReference type="ProteomicsDB" id="243005">
    <molecule id="Q9STN5-1"/>
</dbReference>
<dbReference type="EnsemblPlants" id="AT4G08330.1">
    <molecule id="Q9STN5-1"/>
    <property type="protein sequence ID" value="AT4G08330.1"/>
    <property type="gene ID" value="AT4G08330"/>
</dbReference>
<dbReference type="GeneID" id="826387"/>
<dbReference type="Gramene" id="AT4G08330.1">
    <molecule id="Q9STN5-1"/>
    <property type="protein sequence ID" value="AT4G08330.1"/>
    <property type="gene ID" value="AT4G08330"/>
</dbReference>
<dbReference type="KEGG" id="ath:AT4G08330"/>
<dbReference type="Araport" id="AT4G08330"/>
<dbReference type="TAIR" id="AT4G08330"/>
<dbReference type="eggNOG" id="ENOG502RZYC">
    <property type="taxonomic scope" value="Eukaryota"/>
</dbReference>
<dbReference type="HOGENOM" id="CLU_106028_0_0_1"/>
<dbReference type="InParanoid" id="Q9STN5"/>
<dbReference type="OMA" id="CIPYFSK"/>
<dbReference type="PhylomeDB" id="Q9STN5"/>
<dbReference type="PRO" id="PR:Q9STN5"/>
<dbReference type="Proteomes" id="UP000006548">
    <property type="component" value="Chromosome 4"/>
</dbReference>
<dbReference type="ExpressionAtlas" id="Q9STN5">
    <property type="expression patterns" value="baseline and differential"/>
</dbReference>
<dbReference type="GO" id="GO:0009507">
    <property type="term" value="C:chloroplast"/>
    <property type="evidence" value="ECO:0007669"/>
    <property type="project" value="UniProtKB-SubCell"/>
</dbReference>
<dbReference type="InterPro" id="IPR045282">
    <property type="entry name" value="At4g08330-like"/>
</dbReference>
<dbReference type="PANTHER" id="PTHR33674">
    <property type="entry name" value="METHIONINE-S-OXIDE REDUCTASE"/>
    <property type="match status" value="1"/>
</dbReference>
<dbReference type="PANTHER" id="PTHR33674:SF8">
    <property type="entry name" value="OS01G0833400 PROTEIN"/>
    <property type="match status" value="1"/>
</dbReference>
<dbReference type="Pfam" id="PF24046">
    <property type="entry name" value="At4g08330"/>
    <property type="match status" value="1"/>
</dbReference>
<name>Y4833_ARATH</name>
<sequence length="164" mass="18206">MERSASVGVNDGRFGGNQFYSPSFSSSSSSSSMRHVNYSCGSCGYELNLSSTNRITSTIGSKYGKSMKSGIISFFNIDEGRFSQVDEFQCMPHFSRYSWGLFRHRTKLLCRKCNNYIGNASQEKAPEYALVTQNSDPTSPRIGSVTKYDIRIRSLQPSSAVALL</sequence>
<feature type="transit peptide" description="Chloroplast" evidence="1">
    <location>
        <begin position="1"/>
        <end position="60"/>
    </location>
</feature>
<feature type="chain" id="PRO_0000312342" description="Uncharacterized protein At4g08330, chloroplastic">
    <location>
        <begin position="61"/>
        <end position="164"/>
    </location>
</feature>
<protein>
    <recommendedName>
        <fullName>Uncharacterized protein At4g08330, chloroplastic</fullName>
    </recommendedName>
</protein>
<comment type="subcellular location">
    <subcellularLocation>
        <location evidence="2">Plastid</location>
        <location evidence="2">Chloroplast</location>
    </subcellularLocation>
</comment>
<comment type="alternative products">
    <event type="alternative splicing"/>
    <isoform>
        <id>Q9STN5-1</id>
        <name>1</name>
        <sequence type="displayed"/>
    </isoform>
    <text>A number of isoforms are produced. According to EST sequences.</text>
</comment>
<reference key="1">
    <citation type="journal article" date="1999" name="Nature">
        <title>Sequence and analysis of chromosome 4 of the plant Arabidopsis thaliana.</title>
        <authorList>
            <person name="Mayer K.F.X."/>
            <person name="Schueller C."/>
            <person name="Wambutt R."/>
            <person name="Murphy G."/>
            <person name="Volckaert G."/>
            <person name="Pohl T."/>
            <person name="Duesterhoeft A."/>
            <person name="Stiekema W."/>
            <person name="Entian K.-D."/>
            <person name="Terryn N."/>
            <person name="Harris B."/>
            <person name="Ansorge W."/>
            <person name="Brandt P."/>
            <person name="Grivell L.A."/>
            <person name="Rieger M."/>
            <person name="Weichselgartner M."/>
            <person name="de Simone V."/>
            <person name="Obermaier B."/>
            <person name="Mache R."/>
            <person name="Mueller M."/>
            <person name="Kreis M."/>
            <person name="Delseny M."/>
            <person name="Puigdomenech P."/>
            <person name="Watson M."/>
            <person name="Schmidtheini T."/>
            <person name="Reichert B."/>
            <person name="Portetelle D."/>
            <person name="Perez-Alonso M."/>
            <person name="Boutry M."/>
            <person name="Bancroft I."/>
            <person name="Vos P."/>
            <person name="Hoheisel J."/>
            <person name="Zimmermann W."/>
            <person name="Wedler H."/>
            <person name="Ridley P."/>
            <person name="Langham S.-A."/>
            <person name="McCullagh B."/>
            <person name="Bilham L."/>
            <person name="Robben J."/>
            <person name="van der Schueren J."/>
            <person name="Grymonprez B."/>
            <person name="Chuang Y.-J."/>
            <person name="Vandenbussche F."/>
            <person name="Braeken M."/>
            <person name="Weltjens I."/>
            <person name="Voet M."/>
            <person name="Bastiaens I."/>
            <person name="Aert R."/>
            <person name="Defoor E."/>
            <person name="Weitzenegger T."/>
            <person name="Bothe G."/>
            <person name="Ramsperger U."/>
            <person name="Hilbert H."/>
            <person name="Braun M."/>
            <person name="Holzer E."/>
            <person name="Brandt A."/>
            <person name="Peters S."/>
            <person name="van Staveren M."/>
            <person name="Dirkse W."/>
            <person name="Mooijman P."/>
            <person name="Klein Lankhorst R."/>
            <person name="Rose M."/>
            <person name="Hauf J."/>
            <person name="Koetter P."/>
            <person name="Berneiser S."/>
            <person name="Hempel S."/>
            <person name="Feldpausch M."/>
            <person name="Lamberth S."/>
            <person name="Van den Daele H."/>
            <person name="De Keyser A."/>
            <person name="Buysshaert C."/>
            <person name="Gielen J."/>
            <person name="Villarroel R."/>
            <person name="De Clercq R."/>
            <person name="van Montagu M."/>
            <person name="Rogers J."/>
            <person name="Cronin A."/>
            <person name="Quail M.A."/>
            <person name="Bray-Allen S."/>
            <person name="Clark L."/>
            <person name="Doggett J."/>
            <person name="Hall S."/>
            <person name="Kay M."/>
            <person name="Lennard N."/>
            <person name="McLay K."/>
            <person name="Mayes R."/>
            <person name="Pettett A."/>
            <person name="Rajandream M.A."/>
            <person name="Lyne M."/>
            <person name="Benes V."/>
            <person name="Rechmann S."/>
            <person name="Borkova D."/>
            <person name="Bloecker H."/>
            <person name="Scharfe M."/>
            <person name="Grimm M."/>
            <person name="Loehnert T.-H."/>
            <person name="Dose S."/>
            <person name="de Haan M."/>
            <person name="Maarse A.C."/>
            <person name="Schaefer M."/>
            <person name="Mueller-Auer S."/>
            <person name="Gabel C."/>
            <person name="Fuchs M."/>
            <person name="Fartmann B."/>
            <person name="Granderath K."/>
            <person name="Dauner D."/>
            <person name="Herzl A."/>
            <person name="Neumann S."/>
            <person name="Argiriou A."/>
            <person name="Vitale D."/>
            <person name="Liguori R."/>
            <person name="Piravandi E."/>
            <person name="Massenet O."/>
            <person name="Quigley F."/>
            <person name="Clabauld G."/>
            <person name="Muendlein A."/>
            <person name="Felber R."/>
            <person name="Schnabl S."/>
            <person name="Hiller R."/>
            <person name="Schmidt W."/>
            <person name="Lecharny A."/>
            <person name="Aubourg S."/>
            <person name="Chefdor F."/>
            <person name="Cooke R."/>
            <person name="Berger C."/>
            <person name="Monfort A."/>
            <person name="Casacuberta E."/>
            <person name="Gibbons T."/>
            <person name="Weber N."/>
            <person name="Vandenbol M."/>
            <person name="Bargues M."/>
            <person name="Terol J."/>
            <person name="Torres A."/>
            <person name="Perez-Perez A."/>
            <person name="Purnelle B."/>
            <person name="Bent E."/>
            <person name="Johnson S."/>
            <person name="Tacon D."/>
            <person name="Jesse T."/>
            <person name="Heijnen L."/>
            <person name="Schwarz S."/>
            <person name="Scholler P."/>
            <person name="Heber S."/>
            <person name="Francs P."/>
            <person name="Bielke C."/>
            <person name="Frishman D."/>
            <person name="Haase D."/>
            <person name="Lemcke K."/>
            <person name="Mewes H.-W."/>
            <person name="Stocker S."/>
            <person name="Zaccaria P."/>
            <person name="Bevan M."/>
            <person name="Wilson R.K."/>
            <person name="de la Bastide M."/>
            <person name="Habermann K."/>
            <person name="Parnell L."/>
            <person name="Dedhia N."/>
            <person name="Gnoj L."/>
            <person name="Schutz K."/>
            <person name="Huang E."/>
            <person name="Spiegel L."/>
            <person name="Sekhon M."/>
            <person name="Murray J."/>
            <person name="Sheet P."/>
            <person name="Cordes M."/>
            <person name="Abu-Threideh J."/>
            <person name="Stoneking T."/>
            <person name="Kalicki J."/>
            <person name="Graves T."/>
            <person name="Harmon G."/>
            <person name="Edwards J."/>
            <person name="Latreille P."/>
            <person name="Courtney L."/>
            <person name="Cloud J."/>
            <person name="Abbott A."/>
            <person name="Scott K."/>
            <person name="Johnson D."/>
            <person name="Minx P."/>
            <person name="Bentley D."/>
            <person name="Fulton B."/>
            <person name="Miller N."/>
            <person name="Greco T."/>
            <person name="Kemp K."/>
            <person name="Kramer J."/>
            <person name="Fulton L."/>
            <person name="Mardis E."/>
            <person name="Dante M."/>
            <person name="Pepin K."/>
            <person name="Hillier L.W."/>
            <person name="Nelson J."/>
            <person name="Spieth J."/>
            <person name="Ryan E."/>
            <person name="Andrews S."/>
            <person name="Geisel C."/>
            <person name="Layman D."/>
            <person name="Du H."/>
            <person name="Ali J."/>
            <person name="Berghoff A."/>
            <person name="Jones K."/>
            <person name="Drone K."/>
            <person name="Cotton M."/>
            <person name="Joshu C."/>
            <person name="Antonoiu B."/>
            <person name="Zidanic M."/>
            <person name="Strong C."/>
            <person name="Sun H."/>
            <person name="Lamar B."/>
            <person name="Yordan C."/>
            <person name="Ma P."/>
            <person name="Zhong J."/>
            <person name="Preston R."/>
            <person name="Vil D."/>
            <person name="Shekher M."/>
            <person name="Matero A."/>
            <person name="Shah R."/>
            <person name="Swaby I.K."/>
            <person name="O'Shaughnessy A."/>
            <person name="Rodriguez M."/>
            <person name="Hoffman J."/>
            <person name="Till S."/>
            <person name="Granat S."/>
            <person name="Shohdy N."/>
            <person name="Hasegawa A."/>
            <person name="Hameed A."/>
            <person name="Lodhi M."/>
            <person name="Johnson A."/>
            <person name="Chen E."/>
            <person name="Marra M.A."/>
            <person name="Martienssen R."/>
            <person name="McCombie W.R."/>
        </authorList>
    </citation>
    <scope>NUCLEOTIDE SEQUENCE [LARGE SCALE GENOMIC DNA]</scope>
    <source>
        <strain>cv. Columbia</strain>
    </source>
</reference>
<reference key="2">
    <citation type="journal article" date="2017" name="Plant J.">
        <title>Araport11: a complete reannotation of the Arabidopsis thaliana reference genome.</title>
        <authorList>
            <person name="Cheng C.Y."/>
            <person name="Krishnakumar V."/>
            <person name="Chan A.P."/>
            <person name="Thibaud-Nissen F."/>
            <person name="Schobel S."/>
            <person name="Town C.D."/>
        </authorList>
    </citation>
    <scope>GENOME REANNOTATION</scope>
    <source>
        <strain>cv. Columbia</strain>
    </source>
</reference>
<reference key="3">
    <citation type="journal article" date="2003" name="Science">
        <title>Empirical analysis of transcriptional activity in the Arabidopsis genome.</title>
        <authorList>
            <person name="Yamada K."/>
            <person name="Lim J."/>
            <person name="Dale J.M."/>
            <person name="Chen H."/>
            <person name="Shinn P."/>
            <person name="Palm C.J."/>
            <person name="Southwick A.M."/>
            <person name="Wu H.C."/>
            <person name="Kim C.J."/>
            <person name="Nguyen M."/>
            <person name="Pham P.K."/>
            <person name="Cheuk R.F."/>
            <person name="Karlin-Newmann G."/>
            <person name="Liu S.X."/>
            <person name="Lam B."/>
            <person name="Sakano H."/>
            <person name="Wu T."/>
            <person name="Yu G."/>
            <person name="Miranda M."/>
            <person name="Quach H.L."/>
            <person name="Tripp M."/>
            <person name="Chang C.H."/>
            <person name="Lee J.M."/>
            <person name="Toriumi M.J."/>
            <person name="Chan M.M."/>
            <person name="Tang C.C."/>
            <person name="Onodera C.S."/>
            <person name="Deng J.M."/>
            <person name="Akiyama K."/>
            <person name="Ansari Y."/>
            <person name="Arakawa T."/>
            <person name="Banh J."/>
            <person name="Banno F."/>
            <person name="Bowser L."/>
            <person name="Brooks S.Y."/>
            <person name="Carninci P."/>
            <person name="Chao Q."/>
            <person name="Choy N."/>
            <person name="Enju A."/>
            <person name="Goldsmith A.D."/>
            <person name="Gurjal M."/>
            <person name="Hansen N.F."/>
            <person name="Hayashizaki Y."/>
            <person name="Johnson-Hopson C."/>
            <person name="Hsuan V.W."/>
            <person name="Iida K."/>
            <person name="Karnes M."/>
            <person name="Khan S."/>
            <person name="Koesema E."/>
            <person name="Ishida J."/>
            <person name="Jiang P.X."/>
            <person name="Jones T."/>
            <person name="Kawai J."/>
            <person name="Kamiya A."/>
            <person name="Meyers C."/>
            <person name="Nakajima M."/>
            <person name="Narusaka M."/>
            <person name="Seki M."/>
            <person name="Sakurai T."/>
            <person name="Satou M."/>
            <person name="Tamse R."/>
            <person name="Vaysberg M."/>
            <person name="Wallender E.K."/>
            <person name="Wong C."/>
            <person name="Yamamura Y."/>
            <person name="Yuan S."/>
            <person name="Shinozaki K."/>
            <person name="Davis R.W."/>
            <person name="Theologis A."/>
            <person name="Ecker J.R."/>
        </authorList>
    </citation>
    <scope>NUCLEOTIDE SEQUENCE [LARGE SCALE MRNA]</scope>
    <source>
        <strain>cv. Columbia</strain>
    </source>
</reference>
<reference key="4">
    <citation type="journal article" date="2002" name="Science">
        <title>Functional annotation of a full-length Arabidopsis cDNA collection.</title>
        <authorList>
            <person name="Seki M."/>
            <person name="Narusaka M."/>
            <person name="Kamiya A."/>
            <person name="Ishida J."/>
            <person name="Satou M."/>
            <person name="Sakurai T."/>
            <person name="Nakajima M."/>
            <person name="Enju A."/>
            <person name="Akiyama K."/>
            <person name="Oono Y."/>
            <person name="Muramatsu M."/>
            <person name="Hayashizaki Y."/>
            <person name="Kawai J."/>
            <person name="Carninci P."/>
            <person name="Itoh M."/>
            <person name="Ishii Y."/>
            <person name="Arakawa T."/>
            <person name="Shibata K."/>
            <person name="Shinagawa A."/>
            <person name="Shinozaki K."/>
        </authorList>
    </citation>
    <scope>NUCLEOTIDE SEQUENCE [LARGE SCALE MRNA]</scope>
    <source>
        <strain>cv. Columbia</strain>
    </source>
</reference>
<reference key="5">
    <citation type="journal article" date="2009" name="Plant Physiol.">
        <title>Large-scale Arabidopsis phosphoproteome profiling reveals novel chloroplast kinase substrates and phosphorylation networks.</title>
        <authorList>
            <person name="Reiland S."/>
            <person name="Messerli G."/>
            <person name="Baerenfaller K."/>
            <person name="Gerrits B."/>
            <person name="Endler A."/>
            <person name="Grossmann J."/>
            <person name="Gruissem W."/>
            <person name="Baginsky S."/>
        </authorList>
    </citation>
    <scope>IDENTIFICATION BY MASS SPECTROMETRY [LARGE SCALE ANALYSIS]</scope>
</reference>
<keyword id="KW-0025">Alternative splicing</keyword>
<keyword id="KW-0150">Chloroplast</keyword>
<keyword id="KW-0934">Plastid</keyword>
<keyword id="KW-1185">Reference proteome</keyword>
<keyword id="KW-0809">Transit peptide</keyword>
<organism>
    <name type="scientific">Arabidopsis thaliana</name>
    <name type="common">Mouse-ear cress</name>
    <dbReference type="NCBI Taxonomy" id="3702"/>
    <lineage>
        <taxon>Eukaryota</taxon>
        <taxon>Viridiplantae</taxon>
        <taxon>Streptophyta</taxon>
        <taxon>Embryophyta</taxon>
        <taxon>Tracheophyta</taxon>
        <taxon>Spermatophyta</taxon>
        <taxon>Magnoliopsida</taxon>
        <taxon>eudicotyledons</taxon>
        <taxon>Gunneridae</taxon>
        <taxon>Pentapetalae</taxon>
        <taxon>rosids</taxon>
        <taxon>malvids</taxon>
        <taxon>Brassicales</taxon>
        <taxon>Brassicaceae</taxon>
        <taxon>Camelineae</taxon>
        <taxon>Arabidopsis</taxon>
    </lineage>
</organism>
<evidence type="ECO:0000255" key="1"/>
<evidence type="ECO:0000305" key="2"/>